<comment type="function">
    <text evidence="1">Interacts with EP300 and acts as a repressor of MYOD-dependent transcription and muscle differentiation. Inhibits EP300 histone acetyltransferase activity. Acts as a repressor of TGFB/SMAD transcriptional responses. May act as a repressor of the TGFB/SMAD3-dependent signaling by selectively blocking formation of TGFB-induced SMAD3-SMAD4 complex (By similarity).</text>
</comment>
<comment type="subunit">
    <text evidence="1">Heterodimer with EID2B. Interacts with the C-terminus of EP300. Interacts with HDAC1 and HDAC2. Interacts with SMAD2, SMAD4 and with the MH2 domain of SMAD3 (By similarity).</text>
</comment>
<comment type="subcellular location">
    <subcellularLocation>
        <location evidence="1">Nucleus</location>
    </subcellularLocation>
</comment>
<comment type="tissue specificity">
    <text evidence="4">Expressed in heart, brain, kidney and pancreas. Not detected in placenta.</text>
</comment>
<comment type="developmental stage">
    <text evidence="4">First detected at 10.5 dpc with highest expression at 11.5 dpc. Expression decreases during later stages of development at 12.5 dpc and 14.5 dpc (at protein level).</text>
</comment>
<comment type="domain">
    <text evidence="1">The N-terminal portion of EID2 is required for nuclear localization.</text>
</comment>
<evidence type="ECO:0000250" key="1">
    <source>
        <dbReference type="UniProtKB" id="Q8N6I1"/>
    </source>
</evidence>
<evidence type="ECO:0000255" key="2"/>
<evidence type="ECO:0000256" key="3">
    <source>
        <dbReference type="SAM" id="MobiDB-lite"/>
    </source>
</evidence>
<evidence type="ECO:0000269" key="4">
    <source>
    </source>
</evidence>
<evidence type="ECO:0000305" key="5"/>
<evidence type="ECO:0000312" key="6">
    <source>
        <dbReference type="EMBL" id="AAH94513.1"/>
    </source>
</evidence>
<evidence type="ECO:0000312" key="7">
    <source>
        <dbReference type="EMBL" id="AAP12560.1"/>
    </source>
</evidence>
<evidence type="ECO:0000312" key="8">
    <source>
        <dbReference type="MGI" id="MGI:2681174"/>
    </source>
</evidence>
<evidence type="ECO:0007744" key="9">
    <source>
    </source>
</evidence>
<organism>
    <name type="scientific">Mus musculus</name>
    <name type="common">Mouse</name>
    <dbReference type="NCBI Taxonomy" id="10090"/>
    <lineage>
        <taxon>Eukaryota</taxon>
        <taxon>Metazoa</taxon>
        <taxon>Chordata</taxon>
        <taxon>Craniata</taxon>
        <taxon>Vertebrata</taxon>
        <taxon>Euteleostomi</taxon>
        <taxon>Mammalia</taxon>
        <taxon>Eutheria</taxon>
        <taxon>Euarchontoglires</taxon>
        <taxon>Glires</taxon>
        <taxon>Rodentia</taxon>
        <taxon>Myomorpha</taxon>
        <taxon>Muroidea</taxon>
        <taxon>Muridae</taxon>
        <taxon>Murinae</taxon>
        <taxon>Mus</taxon>
        <taxon>Mus</taxon>
    </lineage>
</organism>
<feature type="chain" id="PRO_0000315902" description="EP300-interacting inhibitor of differentiation 2">
    <location>
        <begin position="1"/>
        <end position="236"/>
    </location>
</feature>
<feature type="region of interest" description="Disordered" evidence="3">
    <location>
        <begin position="1"/>
        <end position="102"/>
    </location>
</feature>
<feature type="coiled-coil region" evidence="2">
    <location>
        <begin position="170"/>
        <end position="190"/>
    </location>
</feature>
<feature type="compositionally biased region" description="Polar residues" evidence="3">
    <location>
        <begin position="1"/>
        <end position="15"/>
    </location>
</feature>
<feature type="compositionally biased region" description="Low complexity" evidence="3">
    <location>
        <begin position="32"/>
        <end position="68"/>
    </location>
</feature>
<feature type="compositionally biased region" description="Low complexity" evidence="3">
    <location>
        <begin position="75"/>
        <end position="102"/>
    </location>
</feature>
<feature type="modified residue" description="Omega-N-methylarginine" evidence="9">
    <location>
        <position position="63"/>
    </location>
</feature>
<feature type="modified residue" description="Omega-N-methylarginine" evidence="1">
    <location>
        <position position="79"/>
    </location>
</feature>
<accession>Q6X7S9</accession>
<sequence length="236" mass="25304">MSQLPAVSSAPQTGAASRDRRLPQAEVGGGRRALPGPARPGETRGRPMAAAREGPAAPAAAARGGRVAAAREGRAAAARGGPGAAPRGGAAAREGPAAAAASREARMAEVARLLGDPLEEEAPEGRPRSRAGGLAAMPYMRFRHPLSVLGINYQQFLRHYLENYPIAPGRIQELEERRRRFVEACRAREAAFDIEYLRNPQRVDFDILTFTIALTASEVINPLIEELGCDKFIHRE</sequence>
<protein>
    <recommendedName>
        <fullName>EP300-interacting inhibitor of differentiation 2</fullName>
        <shortName>EID-2</shortName>
    </recommendedName>
    <alternativeName>
        <fullName>CREBBP/EP300 inhibitor 2</fullName>
    </alternativeName>
    <alternativeName>
        <fullName>EID-1-like inhibitor of differentiation 2</fullName>
    </alternativeName>
</protein>
<gene>
    <name evidence="6 8" type="primary">Eid2</name>
    <name evidence="8" type="synonym">Cri2</name>
</gene>
<reference evidence="5 7" key="1">
    <citation type="journal article" date="2003" name="Gene">
        <title>EID-2, a novel member of the EID family of p300-binding proteins inhibits transactivation by MyoD.</title>
        <authorList>
            <person name="Ji A."/>
            <person name="Dao D."/>
            <person name="Chen J."/>
            <person name="MacLellan W.R."/>
        </authorList>
    </citation>
    <scope>NUCLEOTIDE SEQUENCE [MRNA]</scope>
    <scope>TISSUE SPECIFICITY</scope>
    <scope>DEVELOPMENTAL STAGE</scope>
</reference>
<reference evidence="6" key="2">
    <citation type="journal article" date="2004" name="Genome Res.">
        <title>The status, quality, and expansion of the NIH full-length cDNA project: the Mammalian Gene Collection (MGC).</title>
        <authorList>
            <consortium name="The MGC Project Team"/>
        </authorList>
    </citation>
    <scope>NUCLEOTIDE SEQUENCE [LARGE SCALE MRNA]</scope>
    <source>
        <strain evidence="6">FVB/N</strain>
        <tissue evidence="6">Mammary tumor</tissue>
    </source>
</reference>
<reference key="3">
    <citation type="journal article" date="2014" name="Mol. Cell. Proteomics">
        <title>Immunoaffinity enrichment and mass spectrometry analysis of protein methylation.</title>
        <authorList>
            <person name="Guo A."/>
            <person name="Gu H."/>
            <person name="Zhou J."/>
            <person name="Mulhern D."/>
            <person name="Wang Y."/>
            <person name="Lee K.A."/>
            <person name="Yang V."/>
            <person name="Aguiar M."/>
            <person name="Kornhauser J."/>
            <person name="Jia X."/>
            <person name="Ren J."/>
            <person name="Beausoleil S.A."/>
            <person name="Silva J.C."/>
            <person name="Vemulapalli V."/>
            <person name="Bedford M.T."/>
            <person name="Comb M.J."/>
        </authorList>
    </citation>
    <scope>METHYLATION [LARGE SCALE ANALYSIS] AT ARG-63</scope>
    <scope>IDENTIFICATION BY MASS SPECTROMETRY [LARGE SCALE ANALYSIS]</scope>
    <source>
        <tissue>Brain</tissue>
        <tissue>Embryo</tissue>
    </source>
</reference>
<dbReference type="EMBL" id="AY251273">
    <property type="protein sequence ID" value="AAP12560.1"/>
    <property type="molecule type" value="mRNA"/>
</dbReference>
<dbReference type="EMBL" id="BC094513">
    <property type="protein sequence ID" value="AAH94513.1"/>
    <property type="molecule type" value="mRNA"/>
</dbReference>
<dbReference type="CCDS" id="CCDS21038.1"/>
<dbReference type="RefSeq" id="NP_940817.1">
    <property type="nucleotide sequence ID" value="NM_198425.2"/>
</dbReference>
<dbReference type="BioGRID" id="239752">
    <property type="interactions" value="2"/>
</dbReference>
<dbReference type="FunCoup" id="Q6X7S9">
    <property type="interactions" value="469"/>
</dbReference>
<dbReference type="STRING" id="10090.ENSMUSP00000062345"/>
<dbReference type="iPTMnet" id="Q6X7S9"/>
<dbReference type="PhosphoSitePlus" id="Q6X7S9"/>
<dbReference type="jPOST" id="Q6X7S9"/>
<dbReference type="PaxDb" id="10090-ENSMUSP00000062345"/>
<dbReference type="ProteomicsDB" id="277815"/>
<dbReference type="Antibodypedia" id="48019">
    <property type="antibodies" value="71 antibodies from 16 providers"/>
</dbReference>
<dbReference type="DNASU" id="386655"/>
<dbReference type="Ensembl" id="ENSMUST00000059596.8">
    <property type="protein sequence ID" value="ENSMUSP00000062345.7"/>
    <property type="gene ID" value="ENSMUSG00000046058.8"/>
</dbReference>
<dbReference type="GeneID" id="386655"/>
<dbReference type="KEGG" id="mmu:386655"/>
<dbReference type="UCSC" id="uc009fyc.1">
    <property type="organism name" value="mouse"/>
</dbReference>
<dbReference type="AGR" id="MGI:2681174"/>
<dbReference type="CTD" id="163126"/>
<dbReference type="MGI" id="MGI:2681174">
    <property type="gene designation" value="Eid2"/>
</dbReference>
<dbReference type="VEuPathDB" id="HostDB:ENSMUSG00000046058"/>
<dbReference type="eggNOG" id="ENOG502RU2W">
    <property type="taxonomic scope" value="Eukaryota"/>
</dbReference>
<dbReference type="GeneTree" id="ENSGT00940000154796"/>
<dbReference type="HOGENOM" id="CLU_102589_0_0_1"/>
<dbReference type="InParanoid" id="Q6X7S9"/>
<dbReference type="OMA" id="FDAEYMR"/>
<dbReference type="OrthoDB" id="9838394at2759"/>
<dbReference type="PhylomeDB" id="Q6X7S9"/>
<dbReference type="TreeFam" id="TF337633"/>
<dbReference type="BioGRID-ORCS" id="386655">
    <property type="hits" value="1 hit in 79 CRISPR screens"/>
</dbReference>
<dbReference type="PRO" id="PR:Q6X7S9"/>
<dbReference type="Proteomes" id="UP000000589">
    <property type="component" value="Chromosome 7"/>
</dbReference>
<dbReference type="RNAct" id="Q6X7S9">
    <property type="molecule type" value="protein"/>
</dbReference>
<dbReference type="Bgee" id="ENSMUSG00000046058">
    <property type="expression patterns" value="Expressed in superior cervical ganglion and 221 other cell types or tissues"/>
</dbReference>
<dbReference type="GO" id="GO:0005654">
    <property type="term" value="C:nucleoplasm"/>
    <property type="evidence" value="ECO:0007669"/>
    <property type="project" value="Ensembl"/>
</dbReference>
<dbReference type="GO" id="GO:0005634">
    <property type="term" value="C:nucleus"/>
    <property type="evidence" value="ECO:0000266"/>
    <property type="project" value="MGI"/>
</dbReference>
<dbReference type="GO" id="GO:0046332">
    <property type="term" value="F:SMAD binding"/>
    <property type="evidence" value="ECO:0000250"/>
    <property type="project" value="HGNC-UCL"/>
</dbReference>
<dbReference type="GO" id="GO:0030154">
    <property type="term" value="P:cell differentiation"/>
    <property type="evidence" value="ECO:0007669"/>
    <property type="project" value="UniProtKB-KW"/>
</dbReference>
<dbReference type="GO" id="GO:0007517">
    <property type="term" value="P:muscle organ development"/>
    <property type="evidence" value="ECO:0007669"/>
    <property type="project" value="UniProtKB-KW"/>
</dbReference>
<dbReference type="GO" id="GO:0060392">
    <property type="term" value="P:negative regulation of SMAD protein signal transduction"/>
    <property type="evidence" value="ECO:0000250"/>
    <property type="project" value="HGNC-UCL"/>
</dbReference>
<dbReference type="GO" id="GO:0000122">
    <property type="term" value="P:negative regulation of transcription by RNA polymerase II"/>
    <property type="evidence" value="ECO:0000250"/>
    <property type="project" value="HGNC-UCL"/>
</dbReference>
<dbReference type="GO" id="GO:0030512">
    <property type="term" value="P:negative regulation of transforming growth factor beta receptor signaling pathway"/>
    <property type="evidence" value="ECO:0000250"/>
    <property type="project" value="HGNC-UCL"/>
</dbReference>
<dbReference type="GO" id="GO:0042127">
    <property type="term" value="P:regulation of cell population proliferation"/>
    <property type="evidence" value="ECO:0000250"/>
    <property type="project" value="HGNC-UCL"/>
</dbReference>
<dbReference type="GO" id="GO:0007181">
    <property type="term" value="P:transforming growth factor beta receptor complex assembly"/>
    <property type="evidence" value="ECO:0000250"/>
    <property type="project" value="HGNC-UCL"/>
</dbReference>
<dbReference type="InterPro" id="IPR033258">
    <property type="entry name" value="EID"/>
</dbReference>
<dbReference type="PANTHER" id="PTHR15556:SF3">
    <property type="entry name" value="EP300-INTERACTING INHIBITOR OF DIFFERENTIATION 2"/>
    <property type="match status" value="1"/>
</dbReference>
<dbReference type="PANTHER" id="PTHR15556">
    <property type="entry name" value="EP300-INTERACTING INHIBITOR OF DIFFERENTIATION 2-RELATED"/>
    <property type="match status" value="1"/>
</dbReference>
<proteinExistence type="evidence at protein level"/>
<name>EID2_MOUSE</name>
<keyword id="KW-0175">Coiled coil</keyword>
<keyword id="KW-0217">Developmental protein</keyword>
<keyword id="KW-0221">Differentiation</keyword>
<keyword id="KW-0488">Methylation</keyword>
<keyword id="KW-0517">Myogenesis</keyword>
<keyword id="KW-0539">Nucleus</keyword>
<keyword id="KW-1185">Reference proteome</keyword>
<keyword id="KW-0678">Repressor</keyword>
<keyword id="KW-0804">Transcription</keyword>
<keyword id="KW-0805">Transcription regulation</keyword>